<sequence>MSLQETIIQELGVKPVIDAQEEIRRSIDFLKRYLKKHPFLKTFVLGISGGQDSTLAGRLAQLAMEELRAETGDDSYKFIAVRLPYGVQADEADAQKALAFIQPDVSLVVNIKESADAMTAAVEATGSPVSDFNKGNIKARCRMIAQYALAGSHSGAVIGTDHAAENITGFFTKFGDGGADILPLYRLNKRQGKQLLQKLGAEPALYEKIPTADLEEDKPGLADEVALGVTYAEIDDYLEGKTISPEAQATIENWWHKGQHKRHLPITVFDDFWE</sequence>
<feature type="chain" id="PRO_1000099051" description="NH(3)-dependent NAD(+) synthetase">
    <location>
        <begin position="1"/>
        <end position="274"/>
    </location>
</feature>
<feature type="binding site" evidence="1">
    <location>
        <begin position="46"/>
        <end position="53"/>
    </location>
    <ligand>
        <name>ATP</name>
        <dbReference type="ChEBI" id="CHEBI:30616"/>
    </ligand>
</feature>
<feature type="binding site" evidence="1">
    <location>
        <position position="52"/>
    </location>
    <ligand>
        <name>Mg(2+)</name>
        <dbReference type="ChEBI" id="CHEBI:18420"/>
    </ligand>
</feature>
<feature type="binding site" evidence="1">
    <location>
        <position position="140"/>
    </location>
    <ligand>
        <name>deamido-NAD(+)</name>
        <dbReference type="ChEBI" id="CHEBI:58437"/>
    </ligand>
</feature>
<feature type="binding site" evidence="1">
    <location>
        <position position="160"/>
    </location>
    <ligand>
        <name>ATP</name>
        <dbReference type="ChEBI" id="CHEBI:30616"/>
    </ligand>
</feature>
<feature type="binding site" evidence="1">
    <location>
        <position position="165"/>
    </location>
    <ligand>
        <name>Mg(2+)</name>
        <dbReference type="ChEBI" id="CHEBI:18420"/>
    </ligand>
</feature>
<feature type="binding site" evidence="1">
    <location>
        <position position="173"/>
    </location>
    <ligand>
        <name>deamido-NAD(+)</name>
        <dbReference type="ChEBI" id="CHEBI:58437"/>
    </ligand>
</feature>
<feature type="binding site" evidence="1">
    <location>
        <position position="180"/>
    </location>
    <ligand>
        <name>deamido-NAD(+)</name>
        <dbReference type="ChEBI" id="CHEBI:58437"/>
    </ligand>
</feature>
<feature type="binding site" evidence="1">
    <location>
        <position position="189"/>
    </location>
    <ligand>
        <name>ATP</name>
        <dbReference type="ChEBI" id="CHEBI:30616"/>
    </ligand>
</feature>
<feature type="binding site" evidence="1">
    <location>
        <position position="211"/>
    </location>
    <ligand>
        <name>ATP</name>
        <dbReference type="ChEBI" id="CHEBI:30616"/>
    </ligand>
</feature>
<feature type="binding site" evidence="1">
    <location>
        <begin position="260"/>
        <end position="261"/>
    </location>
    <ligand>
        <name>deamido-NAD(+)</name>
        <dbReference type="ChEBI" id="CHEBI:58437"/>
    </ligand>
</feature>
<dbReference type="EC" id="6.3.1.5" evidence="1"/>
<dbReference type="EMBL" id="CP001033">
    <property type="protein sequence ID" value="ACB90659.1"/>
    <property type="molecule type" value="Genomic_DNA"/>
</dbReference>
<dbReference type="RefSeq" id="WP_000058033.1">
    <property type="nucleotide sequence ID" value="NC_010582.1"/>
</dbReference>
<dbReference type="SMR" id="B2IQN8"/>
<dbReference type="GeneID" id="45653323"/>
<dbReference type="KEGG" id="spw:SPCG_1407"/>
<dbReference type="HOGENOM" id="CLU_059327_3_0_9"/>
<dbReference type="UniPathway" id="UPA00253">
    <property type="reaction ID" value="UER00333"/>
</dbReference>
<dbReference type="GO" id="GO:0005737">
    <property type="term" value="C:cytoplasm"/>
    <property type="evidence" value="ECO:0007669"/>
    <property type="project" value="InterPro"/>
</dbReference>
<dbReference type="GO" id="GO:0005524">
    <property type="term" value="F:ATP binding"/>
    <property type="evidence" value="ECO:0007669"/>
    <property type="project" value="UniProtKB-UniRule"/>
</dbReference>
<dbReference type="GO" id="GO:0004359">
    <property type="term" value="F:glutaminase activity"/>
    <property type="evidence" value="ECO:0007669"/>
    <property type="project" value="InterPro"/>
</dbReference>
<dbReference type="GO" id="GO:0046872">
    <property type="term" value="F:metal ion binding"/>
    <property type="evidence" value="ECO:0007669"/>
    <property type="project" value="UniProtKB-KW"/>
</dbReference>
<dbReference type="GO" id="GO:0003952">
    <property type="term" value="F:NAD+ synthase (glutamine-hydrolyzing) activity"/>
    <property type="evidence" value="ECO:0007669"/>
    <property type="project" value="InterPro"/>
</dbReference>
<dbReference type="GO" id="GO:0008795">
    <property type="term" value="F:NAD+ synthase activity"/>
    <property type="evidence" value="ECO:0007669"/>
    <property type="project" value="UniProtKB-UniRule"/>
</dbReference>
<dbReference type="GO" id="GO:0009435">
    <property type="term" value="P:NAD biosynthetic process"/>
    <property type="evidence" value="ECO:0007669"/>
    <property type="project" value="UniProtKB-UniRule"/>
</dbReference>
<dbReference type="CDD" id="cd00553">
    <property type="entry name" value="NAD_synthase"/>
    <property type="match status" value="1"/>
</dbReference>
<dbReference type="FunFam" id="3.40.50.620:FF:000015">
    <property type="entry name" value="NH(3)-dependent NAD(+) synthetase"/>
    <property type="match status" value="1"/>
</dbReference>
<dbReference type="Gene3D" id="3.40.50.620">
    <property type="entry name" value="HUPs"/>
    <property type="match status" value="1"/>
</dbReference>
<dbReference type="HAMAP" id="MF_00193">
    <property type="entry name" value="NadE_ammonia_dep"/>
    <property type="match status" value="1"/>
</dbReference>
<dbReference type="InterPro" id="IPR022310">
    <property type="entry name" value="NAD/GMP_synthase"/>
</dbReference>
<dbReference type="InterPro" id="IPR003694">
    <property type="entry name" value="NAD_synthase"/>
</dbReference>
<dbReference type="InterPro" id="IPR022926">
    <property type="entry name" value="NH(3)-dep_NAD(+)_synth"/>
</dbReference>
<dbReference type="InterPro" id="IPR014729">
    <property type="entry name" value="Rossmann-like_a/b/a_fold"/>
</dbReference>
<dbReference type="NCBIfam" id="TIGR00552">
    <property type="entry name" value="nadE"/>
    <property type="match status" value="1"/>
</dbReference>
<dbReference type="NCBIfam" id="NF001979">
    <property type="entry name" value="PRK00768.1"/>
    <property type="match status" value="1"/>
</dbReference>
<dbReference type="PANTHER" id="PTHR23090">
    <property type="entry name" value="NH 3 /GLUTAMINE-DEPENDENT NAD + SYNTHETASE"/>
    <property type="match status" value="1"/>
</dbReference>
<dbReference type="PANTHER" id="PTHR23090:SF7">
    <property type="entry name" value="NH(3)-DEPENDENT NAD(+) SYNTHETASE"/>
    <property type="match status" value="1"/>
</dbReference>
<dbReference type="Pfam" id="PF02540">
    <property type="entry name" value="NAD_synthase"/>
    <property type="match status" value="1"/>
</dbReference>
<dbReference type="SUPFAM" id="SSF52402">
    <property type="entry name" value="Adenine nucleotide alpha hydrolases-like"/>
    <property type="match status" value="1"/>
</dbReference>
<evidence type="ECO:0000255" key="1">
    <source>
        <dbReference type="HAMAP-Rule" id="MF_00193"/>
    </source>
</evidence>
<proteinExistence type="inferred from homology"/>
<reference key="1">
    <citation type="journal article" date="2009" name="BMC Genomics">
        <title>Genome evolution driven by host adaptations results in a more virulent and antimicrobial-resistant Streptococcus pneumoniae serotype 14.</title>
        <authorList>
            <person name="Ding F."/>
            <person name="Tang P."/>
            <person name="Hsu M.-H."/>
            <person name="Cui P."/>
            <person name="Hu S."/>
            <person name="Yu J."/>
            <person name="Chiu C.-H."/>
        </authorList>
    </citation>
    <scope>NUCLEOTIDE SEQUENCE [LARGE SCALE GENOMIC DNA]</scope>
    <source>
        <strain>CGSP14</strain>
    </source>
</reference>
<accession>B2IQN8</accession>
<organism>
    <name type="scientific">Streptococcus pneumoniae (strain CGSP14)</name>
    <dbReference type="NCBI Taxonomy" id="516950"/>
    <lineage>
        <taxon>Bacteria</taxon>
        <taxon>Bacillati</taxon>
        <taxon>Bacillota</taxon>
        <taxon>Bacilli</taxon>
        <taxon>Lactobacillales</taxon>
        <taxon>Streptococcaceae</taxon>
        <taxon>Streptococcus</taxon>
    </lineage>
</organism>
<comment type="function">
    <text evidence="1">Catalyzes the ATP-dependent amidation of deamido-NAD to form NAD. Uses ammonia as a nitrogen source.</text>
</comment>
<comment type="catalytic activity">
    <reaction evidence="1">
        <text>deamido-NAD(+) + NH4(+) + ATP = AMP + diphosphate + NAD(+) + H(+)</text>
        <dbReference type="Rhea" id="RHEA:21188"/>
        <dbReference type="ChEBI" id="CHEBI:15378"/>
        <dbReference type="ChEBI" id="CHEBI:28938"/>
        <dbReference type="ChEBI" id="CHEBI:30616"/>
        <dbReference type="ChEBI" id="CHEBI:33019"/>
        <dbReference type="ChEBI" id="CHEBI:57540"/>
        <dbReference type="ChEBI" id="CHEBI:58437"/>
        <dbReference type="ChEBI" id="CHEBI:456215"/>
        <dbReference type="EC" id="6.3.1.5"/>
    </reaction>
</comment>
<comment type="pathway">
    <text evidence="1">Cofactor biosynthesis; NAD(+) biosynthesis; NAD(+) from deamido-NAD(+) (ammonia route): step 1/1.</text>
</comment>
<comment type="subunit">
    <text evidence="1">Homodimer.</text>
</comment>
<comment type="similarity">
    <text evidence="1">Belongs to the NAD synthetase family.</text>
</comment>
<keyword id="KW-0067">ATP-binding</keyword>
<keyword id="KW-0436">Ligase</keyword>
<keyword id="KW-0460">Magnesium</keyword>
<keyword id="KW-0479">Metal-binding</keyword>
<keyword id="KW-0520">NAD</keyword>
<keyword id="KW-0547">Nucleotide-binding</keyword>
<name>NADE_STRPS</name>
<protein>
    <recommendedName>
        <fullName evidence="1">NH(3)-dependent NAD(+) synthetase</fullName>
        <ecNumber evidence="1">6.3.1.5</ecNumber>
    </recommendedName>
</protein>
<gene>
    <name evidence="1" type="primary">nadE</name>
    <name type="ordered locus">SPCG_1407</name>
</gene>